<reference key="1">
    <citation type="journal article" date="2006" name="Proc. Natl. Acad. Sci. U.S.A.">
        <title>The partitioned Rhizobium etli genome: genetic and metabolic redundancy in seven interacting replicons.</title>
        <authorList>
            <person name="Gonzalez V."/>
            <person name="Santamaria R.I."/>
            <person name="Bustos P."/>
            <person name="Hernandez-Gonzalez I."/>
            <person name="Medrano-Soto A."/>
            <person name="Moreno-Hagelsieb G."/>
            <person name="Janga S.C."/>
            <person name="Ramirez M.A."/>
            <person name="Jimenez-Jacinto V."/>
            <person name="Collado-Vides J."/>
            <person name="Davila G."/>
        </authorList>
    </citation>
    <scope>NUCLEOTIDE SEQUENCE [LARGE SCALE GENOMIC DNA]</scope>
    <source>
        <strain>ATCC 51251 / DSM 11541 / JCM 21823 / NBRC 15573 / CFN 42</strain>
    </source>
</reference>
<gene>
    <name evidence="1" type="primary">anmK</name>
    <name type="ordered locus">RHE_CH02257</name>
</gene>
<proteinExistence type="inferred from homology"/>
<comment type="function">
    <text evidence="1">Catalyzes the specific phosphorylation of 1,6-anhydro-N-acetylmuramic acid (anhMurNAc) with the simultaneous cleavage of the 1,6-anhydro ring, generating MurNAc-6-P. Is required for the utilization of anhMurNAc either imported from the medium or derived from its own cell wall murein, and thus plays a role in cell wall recycling.</text>
</comment>
<comment type="catalytic activity">
    <reaction evidence="1">
        <text>1,6-anhydro-N-acetyl-beta-muramate + ATP + H2O = N-acetyl-D-muramate 6-phosphate + ADP + H(+)</text>
        <dbReference type="Rhea" id="RHEA:24952"/>
        <dbReference type="ChEBI" id="CHEBI:15377"/>
        <dbReference type="ChEBI" id="CHEBI:15378"/>
        <dbReference type="ChEBI" id="CHEBI:30616"/>
        <dbReference type="ChEBI" id="CHEBI:58690"/>
        <dbReference type="ChEBI" id="CHEBI:58722"/>
        <dbReference type="ChEBI" id="CHEBI:456216"/>
        <dbReference type="EC" id="2.7.1.170"/>
    </reaction>
</comment>
<comment type="pathway">
    <text evidence="1">Amino-sugar metabolism; 1,6-anhydro-N-acetylmuramate degradation.</text>
</comment>
<comment type="pathway">
    <text evidence="1">Cell wall biogenesis; peptidoglycan recycling.</text>
</comment>
<comment type="similarity">
    <text evidence="1">Belongs to the anhydro-N-acetylmuramic acid kinase family.</text>
</comment>
<name>ANMK_RHIEC</name>
<accession>Q2K7Z9</accession>
<evidence type="ECO:0000255" key="1">
    <source>
        <dbReference type="HAMAP-Rule" id="MF_01270"/>
    </source>
</evidence>
<sequence>MDVVRTAIGLMSGTSMDGIDVALIRTDGRGFIERGPFLGMPYDAEFRGRLKRALELARPLRDRNERPGELREIEQELTLRHATAVTAFLERFGLAANGVDVLGFHGQTVLHRPDEGLTIQIGDGRELARRTGLSVVYDMRANDMVHGGQGAPLVPAYHAALAGKFQQAGEAVCFVNIGGISNLTYIGADGRIAAFDSGPGNTLIDQWVEMQTGRTYDPGGEIGGRGKVVPALAQRYLDSPFFRGNVRRSLDRGDFAPLRPDEASLEDGARTLAHVAAASIVKSAGFLPERPSAYIVCGGGRLNGTLMAEFSAMAEGSRVLSAEAAGFDGDAMEAEAWAYLAVRSLDGLPLTFPGTTGVAAPVSGGVLATP</sequence>
<organism>
    <name type="scientific">Rhizobium etli (strain ATCC 51251 / DSM 11541 / JCM 21823 / NBRC 15573 / CFN 42)</name>
    <dbReference type="NCBI Taxonomy" id="347834"/>
    <lineage>
        <taxon>Bacteria</taxon>
        <taxon>Pseudomonadati</taxon>
        <taxon>Pseudomonadota</taxon>
        <taxon>Alphaproteobacteria</taxon>
        <taxon>Hyphomicrobiales</taxon>
        <taxon>Rhizobiaceae</taxon>
        <taxon>Rhizobium/Agrobacterium group</taxon>
        <taxon>Rhizobium</taxon>
    </lineage>
</organism>
<keyword id="KW-0067">ATP-binding</keyword>
<keyword id="KW-0119">Carbohydrate metabolism</keyword>
<keyword id="KW-0418">Kinase</keyword>
<keyword id="KW-0547">Nucleotide-binding</keyword>
<keyword id="KW-1185">Reference proteome</keyword>
<keyword id="KW-0808">Transferase</keyword>
<feature type="chain" id="PRO_0000250040" description="Anhydro-N-acetylmuramic acid kinase">
    <location>
        <begin position="1"/>
        <end position="370"/>
    </location>
</feature>
<feature type="binding site" evidence="1">
    <location>
        <begin position="13"/>
        <end position="20"/>
    </location>
    <ligand>
        <name>ATP</name>
        <dbReference type="ChEBI" id="CHEBI:30616"/>
    </ligand>
</feature>
<protein>
    <recommendedName>
        <fullName evidence="1">Anhydro-N-acetylmuramic acid kinase</fullName>
        <ecNumber evidence="1">2.7.1.170</ecNumber>
    </recommendedName>
    <alternativeName>
        <fullName evidence="1">AnhMurNAc kinase</fullName>
    </alternativeName>
</protein>
<dbReference type="EC" id="2.7.1.170" evidence="1"/>
<dbReference type="EMBL" id="CP000133">
    <property type="protein sequence ID" value="ABC91037.1"/>
    <property type="molecule type" value="Genomic_DNA"/>
</dbReference>
<dbReference type="RefSeq" id="WP_011425517.1">
    <property type="nucleotide sequence ID" value="NC_007761.1"/>
</dbReference>
<dbReference type="SMR" id="Q2K7Z9"/>
<dbReference type="KEGG" id="ret:RHE_CH02257"/>
<dbReference type="eggNOG" id="COG2377">
    <property type="taxonomic scope" value="Bacteria"/>
</dbReference>
<dbReference type="HOGENOM" id="CLU_038782_3_0_5"/>
<dbReference type="OrthoDB" id="9763949at2"/>
<dbReference type="UniPathway" id="UPA00343"/>
<dbReference type="UniPathway" id="UPA00544"/>
<dbReference type="Proteomes" id="UP000001936">
    <property type="component" value="Chromosome"/>
</dbReference>
<dbReference type="GO" id="GO:0005524">
    <property type="term" value="F:ATP binding"/>
    <property type="evidence" value="ECO:0007669"/>
    <property type="project" value="UniProtKB-UniRule"/>
</dbReference>
<dbReference type="GO" id="GO:0016301">
    <property type="term" value="F:kinase activity"/>
    <property type="evidence" value="ECO:0007669"/>
    <property type="project" value="UniProtKB-KW"/>
</dbReference>
<dbReference type="GO" id="GO:0016773">
    <property type="term" value="F:phosphotransferase activity, alcohol group as acceptor"/>
    <property type="evidence" value="ECO:0007669"/>
    <property type="project" value="UniProtKB-UniRule"/>
</dbReference>
<dbReference type="GO" id="GO:0097175">
    <property type="term" value="P:1,6-anhydro-N-acetyl-beta-muramic acid catabolic process"/>
    <property type="evidence" value="ECO:0007669"/>
    <property type="project" value="UniProtKB-UniRule"/>
</dbReference>
<dbReference type="GO" id="GO:0006040">
    <property type="term" value="P:amino sugar metabolic process"/>
    <property type="evidence" value="ECO:0007669"/>
    <property type="project" value="InterPro"/>
</dbReference>
<dbReference type="GO" id="GO:0009254">
    <property type="term" value="P:peptidoglycan turnover"/>
    <property type="evidence" value="ECO:0007669"/>
    <property type="project" value="UniProtKB-UniRule"/>
</dbReference>
<dbReference type="Gene3D" id="3.30.420.40">
    <property type="match status" value="2"/>
</dbReference>
<dbReference type="HAMAP" id="MF_01270">
    <property type="entry name" value="AnhMurNAc_kinase"/>
    <property type="match status" value="1"/>
</dbReference>
<dbReference type="InterPro" id="IPR005338">
    <property type="entry name" value="Anhydro_N_Ac-Mur_kinase"/>
</dbReference>
<dbReference type="InterPro" id="IPR043129">
    <property type="entry name" value="ATPase_NBD"/>
</dbReference>
<dbReference type="NCBIfam" id="NF007141">
    <property type="entry name" value="PRK09585.1-5"/>
    <property type="match status" value="1"/>
</dbReference>
<dbReference type="PANTHER" id="PTHR30605">
    <property type="entry name" value="ANHYDRO-N-ACETYLMURAMIC ACID KINASE"/>
    <property type="match status" value="1"/>
</dbReference>
<dbReference type="PANTHER" id="PTHR30605:SF0">
    <property type="entry name" value="ANHYDRO-N-ACETYLMURAMIC ACID KINASE"/>
    <property type="match status" value="1"/>
</dbReference>
<dbReference type="Pfam" id="PF03702">
    <property type="entry name" value="AnmK"/>
    <property type="match status" value="1"/>
</dbReference>
<dbReference type="SUPFAM" id="SSF53067">
    <property type="entry name" value="Actin-like ATPase domain"/>
    <property type="match status" value="1"/>
</dbReference>